<reference key="1">
    <citation type="journal article" date="2006" name="Appl. Environ. Microbiol.">
        <title>Complete genome sequence of the marine, chemolithoautotrophic, ammonia-oxidizing bacterium Nitrosococcus oceani ATCC 19707.</title>
        <authorList>
            <person name="Klotz M.G."/>
            <person name="Arp D.J."/>
            <person name="Chain P.S.G."/>
            <person name="El-Sheikh A.F."/>
            <person name="Hauser L.J."/>
            <person name="Hommes N.G."/>
            <person name="Larimer F.W."/>
            <person name="Malfatti S.A."/>
            <person name="Norton J.M."/>
            <person name="Poret-Peterson A.T."/>
            <person name="Vergez L.M."/>
            <person name="Ward B.B."/>
        </authorList>
    </citation>
    <scope>NUCLEOTIDE SEQUENCE [LARGE SCALE GENOMIC DNA]</scope>
    <source>
        <strain>ATCC 19707 / BCRC 17464 / JCM 30415 / NCIMB 11848 / C-107</strain>
    </source>
</reference>
<accession>Q3JAC1</accession>
<evidence type="ECO:0000255" key="1">
    <source>
        <dbReference type="HAMAP-Rule" id="MF_00392"/>
    </source>
</evidence>
<proteinExistence type="inferred from homology"/>
<sequence>MENSAPLVAIVAGEASGDQHAAHLIREVKKIAPGVRFGGIAGPQMRAAGVEPLFDSSRLAVVGLVEVLSHLNEIYGAMQKMRHFLEEKHPDLLILVDYPEFNLRLAKRAKTLGIKVLYYISPQVWAWRQYRVHQIGQVVDMMAVVLPFEVPFYEQAGVPVNFVGHPLQHEVKSKFNRNEAVVEFGFNPCCKTLGLLPGSRHSEIKRLLPVLLEAAERIYSEEPEIQYLLPLAATLKEIDLAPYLKGYRLPLRVIPDRSYDVMAACDAMVAASGTVTLEAALMGVPLVVIYKMNSLSYWMGRLLIKVDHIALCNIIAGEGVAPELIQQDASPERIALEALNLLRDKERRQTMQQKFYAIKHKLGAGAQRTIAELTVAMLEGENLGRAS</sequence>
<dbReference type="EC" id="2.4.1.182" evidence="1"/>
<dbReference type="EMBL" id="CP000127">
    <property type="protein sequence ID" value="ABA58225.1"/>
    <property type="molecule type" value="Genomic_DNA"/>
</dbReference>
<dbReference type="RefSeq" id="WP_002808842.1">
    <property type="nucleotide sequence ID" value="NC_007484.1"/>
</dbReference>
<dbReference type="SMR" id="Q3JAC1"/>
<dbReference type="FunCoup" id="Q3JAC1">
    <property type="interactions" value="301"/>
</dbReference>
<dbReference type="STRING" id="323261.Noc_1753"/>
<dbReference type="CAZy" id="GT19">
    <property type="family name" value="Glycosyltransferase Family 19"/>
</dbReference>
<dbReference type="KEGG" id="noc:Noc_1753"/>
<dbReference type="eggNOG" id="COG0763">
    <property type="taxonomic scope" value="Bacteria"/>
</dbReference>
<dbReference type="HOGENOM" id="CLU_036577_3_1_6"/>
<dbReference type="InParanoid" id="Q3JAC1"/>
<dbReference type="UniPathway" id="UPA00973"/>
<dbReference type="Proteomes" id="UP000006838">
    <property type="component" value="Chromosome"/>
</dbReference>
<dbReference type="GO" id="GO:0016020">
    <property type="term" value="C:membrane"/>
    <property type="evidence" value="ECO:0007669"/>
    <property type="project" value="GOC"/>
</dbReference>
<dbReference type="GO" id="GO:0008915">
    <property type="term" value="F:lipid-A-disaccharide synthase activity"/>
    <property type="evidence" value="ECO:0007669"/>
    <property type="project" value="UniProtKB-UniRule"/>
</dbReference>
<dbReference type="GO" id="GO:0005543">
    <property type="term" value="F:phospholipid binding"/>
    <property type="evidence" value="ECO:0007669"/>
    <property type="project" value="TreeGrafter"/>
</dbReference>
<dbReference type="GO" id="GO:0009245">
    <property type="term" value="P:lipid A biosynthetic process"/>
    <property type="evidence" value="ECO:0007669"/>
    <property type="project" value="UniProtKB-UniRule"/>
</dbReference>
<dbReference type="Gene3D" id="3.40.50.2000">
    <property type="entry name" value="Glycogen Phosphorylase B"/>
    <property type="match status" value="1"/>
</dbReference>
<dbReference type="HAMAP" id="MF_00392">
    <property type="entry name" value="LpxB"/>
    <property type="match status" value="1"/>
</dbReference>
<dbReference type="InterPro" id="IPR003835">
    <property type="entry name" value="Glyco_trans_19"/>
</dbReference>
<dbReference type="NCBIfam" id="TIGR00215">
    <property type="entry name" value="lpxB"/>
    <property type="match status" value="1"/>
</dbReference>
<dbReference type="PANTHER" id="PTHR30372">
    <property type="entry name" value="LIPID-A-DISACCHARIDE SYNTHASE"/>
    <property type="match status" value="1"/>
</dbReference>
<dbReference type="PANTHER" id="PTHR30372:SF4">
    <property type="entry name" value="LIPID-A-DISACCHARIDE SYNTHASE, MITOCHONDRIAL-RELATED"/>
    <property type="match status" value="1"/>
</dbReference>
<dbReference type="Pfam" id="PF02684">
    <property type="entry name" value="LpxB"/>
    <property type="match status" value="1"/>
</dbReference>
<dbReference type="SUPFAM" id="SSF53756">
    <property type="entry name" value="UDP-Glycosyltransferase/glycogen phosphorylase"/>
    <property type="match status" value="1"/>
</dbReference>
<organism>
    <name type="scientific">Nitrosococcus oceani (strain ATCC 19707 / BCRC 17464 / JCM 30415 / NCIMB 11848 / C-107)</name>
    <dbReference type="NCBI Taxonomy" id="323261"/>
    <lineage>
        <taxon>Bacteria</taxon>
        <taxon>Pseudomonadati</taxon>
        <taxon>Pseudomonadota</taxon>
        <taxon>Gammaproteobacteria</taxon>
        <taxon>Chromatiales</taxon>
        <taxon>Chromatiaceae</taxon>
        <taxon>Nitrosococcus</taxon>
    </lineage>
</organism>
<keyword id="KW-0328">Glycosyltransferase</keyword>
<keyword id="KW-0441">Lipid A biosynthesis</keyword>
<keyword id="KW-0444">Lipid biosynthesis</keyword>
<keyword id="KW-0443">Lipid metabolism</keyword>
<keyword id="KW-1185">Reference proteome</keyword>
<keyword id="KW-0808">Transferase</keyword>
<comment type="function">
    <text evidence="1">Condensation of UDP-2,3-diacylglucosamine and 2,3-diacylglucosamine-1-phosphate to form lipid A disaccharide, a precursor of lipid A, a phosphorylated glycolipid that anchors the lipopolysaccharide to the outer membrane of the cell.</text>
</comment>
<comment type="catalytic activity">
    <reaction evidence="1">
        <text>a lipid X + a UDP-2-N,3-O-bis[(3R)-3-hydroxyacyl]-alpha-D-glucosamine = a lipid A disaccharide + UDP + H(+)</text>
        <dbReference type="Rhea" id="RHEA:67828"/>
        <dbReference type="ChEBI" id="CHEBI:15378"/>
        <dbReference type="ChEBI" id="CHEBI:58223"/>
        <dbReference type="ChEBI" id="CHEBI:137748"/>
        <dbReference type="ChEBI" id="CHEBI:176338"/>
        <dbReference type="ChEBI" id="CHEBI:176343"/>
        <dbReference type="EC" id="2.4.1.182"/>
    </reaction>
</comment>
<comment type="pathway">
    <text evidence="1">Bacterial outer membrane biogenesis; LPS lipid A biosynthesis.</text>
</comment>
<comment type="similarity">
    <text evidence="1">Belongs to the LpxB family.</text>
</comment>
<protein>
    <recommendedName>
        <fullName evidence="1">Lipid-A-disaccharide synthase</fullName>
        <ecNumber evidence="1">2.4.1.182</ecNumber>
    </recommendedName>
</protein>
<feature type="chain" id="PRO_0000255203" description="Lipid-A-disaccharide synthase">
    <location>
        <begin position="1"/>
        <end position="387"/>
    </location>
</feature>
<gene>
    <name evidence="1" type="primary">lpxB</name>
    <name type="ordered locus">Noc_1753</name>
</gene>
<name>LPXB_NITOC</name>